<accession>Q1IG30</accession>
<reference key="1">
    <citation type="journal article" date="2006" name="Nat. Biotechnol.">
        <title>Complete genome sequence of the entomopathogenic and metabolically versatile soil bacterium Pseudomonas entomophila.</title>
        <authorList>
            <person name="Vodovar N."/>
            <person name="Vallenet D."/>
            <person name="Cruveiller S."/>
            <person name="Rouy Z."/>
            <person name="Barbe V."/>
            <person name="Acosta C."/>
            <person name="Cattolico L."/>
            <person name="Jubin C."/>
            <person name="Lajus A."/>
            <person name="Segurens B."/>
            <person name="Vacherie B."/>
            <person name="Wincker P."/>
            <person name="Weissenbach J."/>
            <person name="Lemaitre B."/>
            <person name="Medigue C."/>
            <person name="Boccard F."/>
        </authorList>
    </citation>
    <scope>NUCLEOTIDE SEQUENCE [LARGE SCALE GENOMIC DNA]</scope>
    <source>
        <strain>L48</strain>
    </source>
</reference>
<feature type="chain" id="PRO_1000064210" description="Glycerol-3-phosphate acyltransferase">
    <location>
        <begin position="1"/>
        <end position="189"/>
    </location>
</feature>
<feature type="transmembrane region" description="Helical" evidence="1">
    <location>
        <begin position="1"/>
        <end position="21"/>
    </location>
</feature>
<feature type="transmembrane region" description="Helical" evidence="1">
    <location>
        <begin position="50"/>
        <end position="70"/>
    </location>
</feature>
<feature type="transmembrane region" description="Helical" evidence="1">
    <location>
        <begin position="81"/>
        <end position="101"/>
    </location>
</feature>
<feature type="transmembrane region" description="Helical" evidence="1">
    <location>
        <begin position="111"/>
        <end position="131"/>
    </location>
</feature>
<feature type="transmembrane region" description="Helical" evidence="1">
    <location>
        <begin position="151"/>
        <end position="171"/>
    </location>
</feature>
<comment type="function">
    <text evidence="1">Catalyzes the transfer of an acyl group from acyl-phosphate (acyl-PO(4)) to glycerol-3-phosphate (G3P) to form lysophosphatidic acid (LPA). This enzyme utilizes acyl-phosphate as fatty acyl donor, but not acyl-CoA or acyl-ACP.</text>
</comment>
<comment type="catalytic activity">
    <reaction evidence="1">
        <text>an acyl phosphate + sn-glycerol 3-phosphate = a 1-acyl-sn-glycero-3-phosphate + phosphate</text>
        <dbReference type="Rhea" id="RHEA:34075"/>
        <dbReference type="ChEBI" id="CHEBI:43474"/>
        <dbReference type="ChEBI" id="CHEBI:57597"/>
        <dbReference type="ChEBI" id="CHEBI:57970"/>
        <dbReference type="ChEBI" id="CHEBI:59918"/>
        <dbReference type="EC" id="2.3.1.275"/>
    </reaction>
</comment>
<comment type="pathway">
    <text evidence="1">Lipid metabolism; phospholipid metabolism.</text>
</comment>
<comment type="subunit">
    <text evidence="1">Probably interacts with PlsX.</text>
</comment>
<comment type="subcellular location">
    <subcellularLocation>
        <location evidence="1">Cell inner membrane</location>
        <topology evidence="1">Multi-pass membrane protein</topology>
    </subcellularLocation>
</comment>
<comment type="similarity">
    <text evidence="1">Belongs to the PlsY family.</text>
</comment>
<gene>
    <name evidence="1" type="primary">plsY</name>
    <name type="ordered locus">PSEEN0418</name>
</gene>
<dbReference type="EC" id="2.3.1.275" evidence="1"/>
<dbReference type="EMBL" id="CT573326">
    <property type="protein sequence ID" value="CAK13372.1"/>
    <property type="molecule type" value="Genomic_DNA"/>
</dbReference>
<dbReference type="RefSeq" id="WP_011531829.1">
    <property type="nucleotide sequence ID" value="NC_008027.1"/>
</dbReference>
<dbReference type="SMR" id="Q1IG30"/>
<dbReference type="STRING" id="384676.PSEEN0418"/>
<dbReference type="GeneID" id="32803753"/>
<dbReference type="KEGG" id="pen:PSEEN0418"/>
<dbReference type="eggNOG" id="COG0344">
    <property type="taxonomic scope" value="Bacteria"/>
</dbReference>
<dbReference type="HOGENOM" id="CLU_081254_0_0_6"/>
<dbReference type="OrthoDB" id="9777124at2"/>
<dbReference type="UniPathway" id="UPA00085"/>
<dbReference type="Proteomes" id="UP000000658">
    <property type="component" value="Chromosome"/>
</dbReference>
<dbReference type="GO" id="GO:0005886">
    <property type="term" value="C:plasma membrane"/>
    <property type="evidence" value="ECO:0007669"/>
    <property type="project" value="UniProtKB-SubCell"/>
</dbReference>
<dbReference type="GO" id="GO:0043772">
    <property type="term" value="F:acyl-phosphate glycerol-3-phosphate acyltransferase activity"/>
    <property type="evidence" value="ECO:0007669"/>
    <property type="project" value="UniProtKB-UniRule"/>
</dbReference>
<dbReference type="GO" id="GO:0008654">
    <property type="term" value="P:phospholipid biosynthetic process"/>
    <property type="evidence" value="ECO:0007669"/>
    <property type="project" value="UniProtKB-UniRule"/>
</dbReference>
<dbReference type="HAMAP" id="MF_01043">
    <property type="entry name" value="PlsY"/>
    <property type="match status" value="1"/>
</dbReference>
<dbReference type="InterPro" id="IPR003811">
    <property type="entry name" value="G3P_acylTferase_PlsY"/>
</dbReference>
<dbReference type="NCBIfam" id="TIGR00023">
    <property type="entry name" value="glycerol-3-phosphate 1-O-acyltransferase PlsY"/>
    <property type="match status" value="1"/>
</dbReference>
<dbReference type="PANTHER" id="PTHR30309:SF0">
    <property type="entry name" value="GLYCEROL-3-PHOSPHATE ACYLTRANSFERASE-RELATED"/>
    <property type="match status" value="1"/>
</dbReference>
<dbReference type="PANTHER" id="PTHR30309">
    <property type="entry name" value="INNER MEMBRANE PROTEIN YGIH"/>
    <property type="match status" value="1"/>
</dbReference>
<dbReference type="Pfam" id="PF02660">
    <property type="entry name" value="G3P_acyltransf"/>
    <property type="match status" value="1"/>
</dbReference>
<dbReference type="SMART" id="SM01207">
    <property type="entry name" value="G3P_acyltransf"/>
    <property type="match status" value="1"/>
</dbReference>
<organism>
    <name type="scientific">Pseudomonas entomophila (strain L48)</name>
    <dbReference type="NCBI Taxonomy" id="384676"/>
    <lineage>
        <taxon>Bacteria</taxon>
        <taxon>Pseudomonadati</taxon>
        <taxon>Pseudomonadota</taxon>
        <taxon>Gammaproteobacteria</taxon>
        <taxon>Pseudomonadales</taxon>
        <taxon>Pseudomonadaceae</taxon>
        <taxon>Pseudomonas</taxon>
    </lineage>
</organism>
<sequence length="189" mass="20509">MFWSLALLAYLLGSLSFAIVLSRLTGSPDPRSSGSGNAGATNMLRLAGRKLAILTLLGDLCKGMLPVLLARQVGLDPQEQAWVGICAVLGHLFPVYFRFQGGKGVATAAGMLMALYFPAALLAIGAWVLTFYLTRTSSLAALIATPLTLPLLAWREPEALLPMTVLTLMIVWRHRSNLRDLFAGRERHF</sequence>
<name>PLSY_PSEE4</name>
<evidence type="ECO:0000255" key="1">
    <source>
        <dbReference type="HAMAP-Rule" id="MF_01043"/>
    </source>
</evidence>
<proteinExistence type="inferred from homology"/>
<protein>
    <recommendedName>
        <fullName evidence="1">Glycerol-3-phosphate acyltransferase</fullName>
    </recommendedName>
    <alternativeName>
        <fullName evidence="1">Acyl-PO4 G3P acyltransferase</fullName>
    </alternativeName>
    <alternativeName>
        <fullName evidence="1">Acyl-phosphate--glycerol-3-phosphate acyltransferase</fullName>
    </alternativeName>
    <alternativeName>
        <fullName evidence="1">G3P acyltransferase</fullName>
        <shortName evidence="1">GPAT</shortName>
        <ecNumber evidence="1">2.3.1.275</ecNumber>
    </alternativeName>
    <alternativeName>
        <fullName evidence="1">Lysophosphatidic acid synthase</fullName>
        <shortName evidence="1">LPA synthase</shortName>
    </alternativeName>
</protein>
<keyword id="KW-0997">Cell inner membrane</keyword>
<keyword id="KW-1003">Cell membrane</keyword>
<keyword id="KW-0444">Lipid biosynthesis</keyword>
<keyword id="KW-0443">Lipid metabolism</keyword>
<keyword id="KW-0472">Membrane</keyword>
<keyword id="KW-0594">Phospholipid biosynthesis</keyword>
<keyword id="KW-1208">Phospholipid metabolism</keyword>
<keyword id="KW-0808">Transferase</keyword>
<keyword id="KW-0812">Transmembrane</keyword>
<keyword id="KW-1133">Transmembrane helix</keyword>